<accession>B3PL12</accession>
<reference key="1">
    <citation type="journal article" date="2008" name="J. Bacteriol.">
        <title>Insights into plant cell wall degradation from the genome sequence of the soil bacterium Cellvibrio japonicus.</title>
        <authorList>
            <person name="DeBoy R.T."/>
            <person name="Mongodin E.F."/>
            <person name="Fouts D.E."/>
            <person name="Tailford L.E."/>
            <person name="Khouri H."/>
            <person name="Emerson J.B."/>
            <person name="Mohamoud Y."/>
            <person name="Watkins K."/>
            <person name="Henrissat B."/>
            <person name="Gilbert H.J."/>
            <person name="Nelson K.E."/>
        </authorList>
    </citation>
    <scope>NUCLEOTIDE SEQUENCE [LARGE SCALE GENOMIC DNA]</scope>
    <source>
        <strain>Ueda107</strain>
    </source>
</reference>
<sequence>MENLVALTQEALKLVADAGDLNALEAVRVDYLGKKGHITALMKNLGGLSPEERPAAGAEINKAKDAVQEALNTRKQLLEQAAINAKLASEVVDVSLPGRGLHTGGLHPVTRTLQRIEEIFAAVGYSVEEGPEIEDDYHNFEALNIPSHHPARAMHDTFYVDDTHVLRTHTSPVQVRTMENKKPPIRVICPGRVYRCDSDMTHSPMFHQVEGLVVDKNISFADLKGTMDQFLKAFFEADVPVRFRPSYFPFTEPSAEMDIQCTQCRGKGCRVCKSTGWLEVGGCGMVHPEVFNASGVDPETYTGFAFGMGVERLAMLRYGVNDLRLFFENDLRFLKQF</sequence>
<evidence type="ECO:0000255" key="1">
    <source>
        <dbReference type="HAMAP-Rule" id="MF_00281"/>
    </source>
</evidence>
<gene>
    <name evidence="1" type="primary">pheS</name>
    <name type="ordered locus">CJA_2526</name>
</gene>
<proteinExistence type="inferred from homology"/>
<dbReference type="EC" id="6.1.1.20" evidence="1"/>
<dbReference type="EMBL" id="CP000934">
    <property type="protein sequence ID" value="ACE86351.1"/>
    <property type="molecule type" value="Genomic_DNA"/>
</dbReference>
<dbReference type="RefSeq" id="WP_012488122.1">
    <property type="nucleotide sequence ID" value="NC_010995.1"/>
</dbReference>
<dbReference type="SMR" id="B3PL12"/>
<dbReference type="STRING" id="498211.CJA_2526"/>
<dbReference type="KEGG" id="cja:CJA_2526"/>
<dbReference type="eggNOG" id="COG0016">
    <property type="taxonomic scope" value="Bacteria"/>
</dbReference>
<dbReference type="HOGENOM" id="CLU_025086_0_1_6"/>
<dbReference type="OrthoDB" id="9800719at2"/>
<dbReference type="Proteomes" id="UP000001036">
    <property type="component" value="Chromosome"/>
</dbReference>
<dbReference type="GO" id="GO:0005737">
    <property type="term" value="C:cytoplasm"/>
    <property type="evidence" value="ECO:0007669"/>
    <property type="project" value="UniProtKB-SubCell"/>
</dbReference>
<dbReference type="GO" id="GO:0005524">
    <property type="term" value="F:ATP binding"/>
    <property type="evidence" value="ECO:0007669"/>
    <property type="project" value="UniProtKB-UniRule"/>
</dbReference>
<dbReference type="GO" id="GO:0000287">
    <property type="term" value="F:magnesium ion binding"/>
    <property type="evidence" value="ECO:0007669"/>
    <property type="project" value="UniProtKB-UniRule"/>
</dbReference>
<dbReference type="GO" id="GO:0004826">
    <property type="term" value="F:phenylalanine-tRNA ligase activity"/>
    <property type="evidence" value="ECO:0007669"/>
    <property type="project" value="UniProtKB-UniRule"/>
</dbReference>
<dbReference type="GO" id="GO:0000049">
    <property type="term" value="F:tRNA binding"/>
    <property type="evidence" value="ECO:0007669"/>
    <property type="project" value="InterPro"/>
</dbReference>
<dbReference type="GO" id="GO:0006432">
    <property type="term" value="P:phenylalanyl-tRNA aminoacylation"/>
    <property type="evidence" value="ECO:0007669"/>
    <property type="project" value="UniProtKB-UniRule"/>
</dbReference>
<dbReference type="CDD" id="cd00496">
    <property type="entry name" value="PheRS_alpha_core"/>
    <property type="match status" value="1"/>
</dbReference>
<dbReference type="FunFam" id="3.30.930.10:FF:000003">
    <property type="entry name" value="Phenylalanine--tRNA ligase alpha subunit"/>
    <property type="match status" value="1"/>
</dbReference>
<dbReference type="Gene3D" id="3.30.930.10">
    <property type="entry name" value="Bira Bifunctional Protein, Domain 2"/>
    <property type="match status" value="1"/>
</dbReference>
<dbReference type="HAMAP" id="MF_00281">
    <property type="entry name" value="Phe_tRNA_synth_alpha1"/>
    <property type="match status" value="1"/>
</dbReference>
<dbReference type="InterPro" id="IPR006195">
    <property type="entry name" value="aa-tRNA-synth_II"/>
</dbReference>
<dbReference type="InterPro" id="IPR045864">
    <property type="entry name" value="aa-tRNA-synth_II/BPL/LPL"/>
</dbReference>
<dbReference type="InterPro" id="IPR004529">
    <property type="entry name" value="Phe-tRNA-synth_IIc_asu"/>
</dbReference>
<dbReference type="InterPro" id="IPR004188">
    <property type="entry name" value="Phe-tRNA_ligase_II_N"/>
</dbReference>
<dbReference type="InterPro" id="IPR022911">
    <property type="entry name" value="Phe_tRNA_ligase_alpha1_bac"/>
</dbReference>
<dbReference type="InterPro" id="IPR002319">
    <property type="entry name" value="Phenylalanyl-tRNA_Synthase"/>
</dbReference>
<dbReference type="InterPro" id="IPR010978">
    <property type="entry name" value="tRNA-bd_arm"/>
</dbReference>
<dbReference type="NCBIfam" id="TIGR00468">
    <property type="entry name" value="pheS"/>
    <property type="match status" value="1"/>
</dbReference>
<dbReference type="PANTHER" id="PTHR11538:SF41">
    <property type="entry name" value="PHENYLALANINE--TRNA LIGASE, MITOCHONDRIAL"/>
    <property type="match status" value="1"/>
</dbReference>
<dbReference type="PANTHER" id="PTHR11538">
    <property type="entry name" value="PHENYLALANYL-TRNA SYNTHETASE"/>
    <property type="match status" value="1"/>
</dbReference>
<dbReference type="Pfam" id="PF02912">
    <property type="entry name" value="Phe_tRNA-synt_N"/>
    <property type="match status" value="1"/>
</dbReference>
<dbReference type="Pfam" id="PF01409">
    <property type="entry name" value="tRNA-synt_2d"/>
    <property type="match status" value="1"/>
</dbReference>
<dbReference type="SUPFAM" id="SSF55681">
    <property type="entry name" value="Class II aaRS and biotin synthetases"/>
    <property type="match status" value="1"/>
</dbReference>
<dbReference type="SUPFAM" id="SSF46589">
    <property type="entry name" value="tRNA-binding arm"/>
    <property type="match status" value="1"/>
</dbReference>
<dbReference type="PROSITE" id="PS50862">
    <property type="entry name" value="AA_TRNA_LIGASE_II"/>
    <property type="match status" value="1"/>
</dbReference>
<name>SYFA_CELJU</name>
<comment type="catalytic activity">
    <reaction evidence="1">
        <text>tRNA(Phe) + L-phenylalanine + ATP = L-phenylalanyl-tRNA(Phe) + AMP + diphosphate + H(+)</text>
        <dbReference type="Rhea" id="RHEA:19413"/>
        <dbReference type="Rhea" id="RHEA-COMP:9668"/>
        <dbReference type="Rhea" id="RHEA-COMP:9699"/>
        <dbReference type="ChEBI" id="CHEBI:15378"/>
        <dbReference type="ChEBI" id="CHEBI:30616"/>
        <dbReference type="ChEBI" id="CHEBI:33019"/>
        <dbReference type="ChEBI" id="CHEBI:58095"/>
        <dbReference type="ChEBI" id="CHEBI:78442"/>
        <dbReference type="ChEBI" id="CHEBI:78531"/>
        <dbReference type="ChEBI" id="CHEBI:456215"/>
        <dbReference type="EC" id="6.1.1.20"/>
    </reaction>
</comment>
<comment type="cofactor">
    <cofactor evidence="1">
        <name>Mg(2+)</name>
        <dbReference type="ChEBI" id="CHEBI:18420"/>
    </cofactor>
    <text evidence="1">Binds 2 magnesium ions per tetramer.</text>
</comment>
<comment type="subunit">
    <text evidence="1">Tetramer of two alpha and two beta subunits.</text>
</comment>
<comment type="subcellular location">
    <subcellularLocation>
        <location evidence="1">Cytoplasm</location>
    </subcellularLocation>
</comment>
<comment type="similarity">
    <text evidence="1">Belongs to the class-II aminoacyl-tRNA synthetase family. Phe-tRNA synthetase alpha subunit type 1 subfamily.</text>
</comment>
<organism>
    <name type="scientific">Cellvibrio japonicus (strain Ueda107)</name>
    <name type="common">Pseudomonas fluorescens subsp. cellulosa</name>
    <dbReference type="NCBI Taxonomy" id="498211"/>
    <lineage>
        <taxon>Bacteria</taxon>
        <taxon>Pseudomonadati</taxon>
        <taxon>Pseudomonadota</taxon>
        <taxon>Gammaproteobacteria</taxon>
        <taxon>Cellvibrionales</taxon>
        <taxon>Cellvibrionaceae</taxon>
        <taxon>Cellvibrio</taxon>
    </lineage>
</organism>
<feature type="chain" id="PRO_1000114853" description="Phenylalanine--tRNA ligase alpha subunit">
    <location>
        <begin position="1"/>
        <end position="337"/>
    </location>
</feature>
<feature type="binding site" evidence="1">
    <location>
        <position position="252"/>
    </location>
    <ligand>
        <name>Mg(2+)</name>
        <dbReference type="ChEBI" id="CHEBI:18420"/>
        <note>shared with beta subunit</note>
    </ligand>
</feature>
<keyword id="KW-0030">Aminoacyl-tRNA synthetase</keyword>
<keyword id="KW-0067">ATP-binding</keyword>
<keyword id="KW-0963">Cytoplasm</keyword>
<keyword id="KW-0436">Ligase</keyword>
<keyword id="KW-0460">Magnesium</keyword>
<keyword id="KW-0479">Metal-binding</keyword>
<keyword id="KW-0547">Nucleotide-binding</keyword>
<keyword id="KW-0648">Protein biosynthesis</keyword>
<keyword id="KW-1185">Reference proteome</keyword>
<protein>
    <recommendedName>
        <fullName evidence="1">Phenylalanine--tRNA ligase alpha subunit</fullName>
        <ecNumber evidence="1">6.1.1.20</ecNumber>
    </recommendedName>
    <alternativeName>
        <fullName evidence="1">Phenylalanyl-tRNA synthetase alpha subunit</fullName>
        <shortName evidence="1">PheRS</shortName>
    </alternativeName>
</protein>